<organism>
    <name type="scientific">Kluyveromyces lactis (strain ATCC 8585 / CBS 2359 / DSM 70799 / NBRC 1267 / NRRL Y-1140 / WM37)</name>
    <name type="common">Yeast</name>
    <name type="synonym">Candida sphaerica</name>
    <dbReference type="NCBI Taxonomy" id="284590"/>
    <lineage>
        <taxon>Eukaryota</taxon>
        <taxon>Fungi</taxon>
        <taxon>Dikarya</taxon>
        <taxon>Ascomycota</taxon>
        <taxon>Saccharomycotina</taxon>
        <taxon>Saccharomycetes</taxon>
        <taxon>Saccharomycetales</taxon>
        <taxon>Saccharomycetaceae</taxon>
        <taxon>Kluyveromyces</taxon>
    </lineage>
</organism>
<proteinExistence type="inferred from homology"/>
<feature type="chain" id="PRO_0000238599" description="Sorting nexin MVP1">
    <location>
        <begin position="1"/>
        <end position="512"/>
    </location>
</feature>
<feature type="domain" description="PX" evidence="2">
    <location>
        <begin position="130"/>
        <end position="248"/>
    </location>
</feature>
<feature type="region of interest" description="Disordered" evidence="3">
    <location>
        <begin position="1"/>
        <end position="24"/>
    </location>
</feature>
<feature type="compositionally biased region" description="Low complexity" evidence="3">
    <location>
        <begin position="13"/>
        <end position="22"/>
    </location>
</feature>
<feature type="binding site" evidence="1">
    <location>
        <position position="174"/>
    </location>
    <ligand>
        <name>a 1,2-diacyl-sn-glycero-3-phospho-(1D-myo-inositol-3-phosphate)</name>
        <dbReference type="ChEBI" id="CHEBI:58088"/>
    </ligand>
</feature>
<feature type="binding site" evidence="1">
    <location>
        <position position="176"/>
    </location>
    <ligand>
        <name>a 1,2-diacyl-sn-glycero-3-phospho-(1D-myo-inositol-3-phosphate)</name>
        <dbReference type="ChEBI" id="CHEBI:58088"/>
    </ligand>
</feature>
<feature type="binding site" evidence="1">
    <location>
        <position position="200"/>
    </location>
    <ligand>
        <name>a 1,2-diacyl-sn-glycero-3-phospho-(1D-myo-inositol-3-phosphate)</name>
        <dbReference type="ChEBI" id="CHEBI:58088"/>
    </ligand>
</feature>
<feature type="binding site" evidence="1">
    <location>
        <position position="215"/>
    </location>
    <ligand>
        <name>a 1,2-diacyl-sn-glycero-3-phospho-(1D-myo-inositol-3-phosphate)</name>
        <dbReference type="ChEBI" id="CHEBI:58088"/>
    </ligand>
</feature>
<sequence length="512" mass="59656">MDLEADPWRVNSEENGNNISGSVWEPDNSSVNALKSYSADSLQQEANKRVNDDYLGVNIFSNGDNIVRGTASNVYQNDVLWDRPNIGSTTQETDIRGVNRFQATDTPQYAANDEYKNWVESVRKTYFPLAEDIVSVEEIPEREGLVFKHTNYLVKHLTPLPNTDPSDDRTVVRRYSDFDWLQDVLLRKYPFRMVPELPPKKIGSQNADPLFLAKRRKGLSRFINLVMKHPVLRSDDLVLTFLTVPTDLSGWRKQAHYDTTDEFTDKHISSSFMNLWRKEFSEQWNKADERIDIALDTWVKVTVLIERYEKRMKQVAHERKLLGQILNAIPDTTEALYPQSTATVSQINEGVGLIVEHLNSCADVIERENEEVDSGLSVRFKAFIDVIIALKGLFERYKMMAGNNIPQLQRRVEINQERLNTLESNPDVKGAEYDRVKQSISRDKRSILDQMNRSWLIRECILEEFTIFHETQFLITDCFQRWIEINLRYTNNNVDNWEKICKKLRDMPLQRH</sequence>
<name>MVP1_KLULA</name>
<evidence type="ECO:0000250" key="1"/>
<evidence type="ECO:0000255" key="2">
    <source>
        <dbReference type="PROSITE-ProRule" id="PRU00147"/>
    </source>
</evidence>
<evidence type="ECO:0000256" key="3">
    <source>
        <dbReference type="SAM" id="MobiDB-lite"/>
    </source>
</evidence>
<evidence type="ECO:0000305" key="4"/>
<dbReference type="EMBL" id="CR382123">
    <property type="protein sequence ID" value="CAH01316.1"/>
    <property type="molecule type" value="Genomic_DNA"/>
</dbReference>
<dbReference type="RefSeq" id="XP_452465.1">
    <property type="nucleotide sequence ID" value="XM_452465.1"/>
</dbReference>
<dbReference type="SMR" id="Q6CUC4"/>
<dbReference type="FunCoup" id="Q6CUC4">
    <property type="interactions" value="176"/>
</dbReference>
<dbReference type="STRING" id="284590.Q6CUC4"/>
<dbReference type="PaxDb" id="284590-Q6CUC4"/>
<dbReference type="KEGG" id="kla:KLLA0_C06006g"/>
<dbReference type="eggNOG" id="KOG2273">
    <property type="taxonomic scope" value="Eukaryota"/>
</dbReference>
<dbReference type="HOGENOM" id="CLU_009058_2_0_1"/>
<dbReference type="InParanoid" id="Q6CUC4"/>
<dbReference type="OMA" id="WEYAGAK"/>
<dbReference type="Proteomes" id="UP000000598">
    <property type="component" value="Chromosome C"/>
</dbReference>
<dbReference type="GO" id="GO:0005829">
    <property type="term" value="C:cytosol"/>
    <property type="evidence" value="ECO:0007669"/>
    <property type="project" value="GOC"/>
</dbReference>
<dbReference type="GO" id="GO:0005768">
    <property type="term" value="C:endosome"/>
    <property type="evidence" value="ECO:0007669"/>
    <property type="project" value="TreeGrafter"/>
</dbReference>
<dbReference type="GO" id="GO:0016020">
    <property type="term" value="C:membrane"/>
    <property type="evidence" value="ECO:0007669"/>
    <property type="project" value="UniProtKB-SubCell"/>
</dbReference>
<dbReference type="GO" id="GO:0032266">
    <property type="term" value="F:phosphatidylinositol-3-phosphate binding"/>
    <property type="evidence" value="ECO:0007669"/>
    <property type="project" value="TreeGrafter"/>
</dbReference>
<dbReference type="GO" id="GO:0006623">
    <property type="term" value="P:protein targeting to vacuole"/>
    <property type="evidence" value="ECO:0007669"/>
    <property type="project" value="TreeGrafter"/>
</dbReference>
<dbReference type="GO" id="GO:0042147">
    <property type="term" value="P:retrograde transport, endosome to Golgi"/>
    <property type="evidence" value="ECO:0007669"/>
    <property type="project" value="InterPro"/>
</dbReference>
<dbReference type="CDD" id="cd07597">
    <property type="entry name" value="BAR_SNX8"/>
    <property type="match status" value="1"/>
</dbReference>
<dbReference type="CDD" id="cd06866">
    <property type="entry name" value="PX_SNX8_Mvp1p_like"/>
    <property type="match status" value="1"/>
</dbReference>
<dbReference type="FunFam" id="3.30.1520.10:FF:000042">
    <property type="entry name" value="Sorting nexin mvp1"/>
    <property type="match status" value="1"/>
</dbReference>
<dbReference type="Gene3D" id="3.30.1520.10">
    <property type="entry name" value="Phox-like domain"/>
    <property type="match status" value="1"/>
</dbReference>
<dbReference type="InterPro" id="IPR001683">
    <property type="entry name" value="PX_dom"/>
</dbReference>
<dbReference type="InterPro" id="IPR036871">
    <property type="entry name" value="PX_dom_sf"/>
</dbReference>
<dbReference type="InterPro" id="IPR028662">
    <property type="entry name" value="SNX8/Mvp1"/>
</dbReference>
<dbReference type="InterPro" id="IPR035704">
    <property type="entry name" value="SNX8/Mvp1_PX"/>
</dbReference>
<dbReference type="InterPro" id="IPR045734">
    <property type="entry name" value="Snx8_BAR_dom"/>
</dbReference>
<dbReference type="PANTHER" id="PTHR47554">
    <property type="entry name" value="SORTING NEXIN MVP1"/>
    <property type="match status" value="1"/>
</dbReference>
<dbReference type="PANTHER" id="PTHR47554:SF1">
    <property type="entry name" value="SORTING NEXIN MVP1"/>
    <property type="match status" value="1"/>
</dbReference>
<dbReference type="Pfam" id="PF00787">
    <property type="entry name" value="PX"/>
    <property type="match status" value="1"/>
</dbReference>
<dbReference type="Pfam" id="PF19566">
    <property type="entry name" value="Snx8_BAR_dom"/>
    <property type="match status" value="1"/>
</dbReference>
<dbReference type="SMART" id="SM00312">
    <property type="entry name" value="PX"/>
    <property type="match status" value="1"/>
</dbReference>
<dbReference type="SUPFAM" id="SSF64268">
    <property type="entry name" value="PX domain"/>
    <property type="match status" value="1"/>
</dbReference>
<dbReference type="PROSITE" id="PS50195">
    <property type="entry name" value="PX"/>
    <property type="match status" value="1"/>
</dbReference>
<protein>
    <recommendedName>
        <fullName>Sorting nexin MVP1</fullName>
    </recommendedName>
</protein>
<comment type="function">
    <text evidence="1">Required for vacuolar protein sorting.</text>
</comment>
<comment type="subcellular location">
    <subcellularLocation>
        <location evidence="1">Cytoplasm</location>
    </subcellularLocation>
    <subcellularLocation>
        <location evidence="1">Membrane</location>
        <topology evidence="1">Peripheral membrane protein</topology>
        <orientation evidence="1">Cytoplasmic side</orientation>
    </subcellularLocation>
</comment>
<comment type="domain">
    <text evidence="1">The PX domain binds phosphatidylinositol 3-phosphate which is necessary for peripheral membrane localization.</text>
</comment>
<comment type="similarity">
    <text evidence="4">Belongs to the sorting nexin family.</text>
</comment>
<accession>Q6CUC4</accession>
<gene>
    <name type="primary">MVP1</name>
    <name type="ordered locus">KLLA0C06006g</name>
</gene>
<reference key="1">
    <citation type="journal article" date="2004" name="Nature">
        <title>Genome evolution in yeasts.</title>
        <authorList>
            <person name="Dujon B."/>
            <person name="Sherman D."/>
            <person name="Fischer G."/>
            <person name="Durrens P."/>
            <person name="Casaregola S."/>
            <person name="Lafontaine I."/>
            <person name="de Montigny J."/>
            <person name="Marck C."/>
            <person name="Neuveglise C."/>
            <person name="Talla E."/>
            <person name="Goffard N."/>
            <person name="Frangeul L."/>
            <person name="Aigle M."/>
            <person name="Anthouard V."/>
            <person name="Babour A."/>
            <person name="Barbe V."/>
            <person name="Barnay S."/>
            <person name="Blanchin S."/>
            <person name="Beckerich J.-M."/>
            <person name="Beyne E."/>
            <person name="Bleykasten C."/>
            <person name="Boisrame A."/>
            <person name="Boyer J."/>
            <person name="Cattolico L."/>
            <person name="Confanioleri F."/>
            <person name="de Daruvar A."/>
            <person name="Despons L."/>
            <person name="Fabre E."/>
            <person name="Fairhead C."/>
            <person name="Ferry-Dumazet H."/>
            <person name="Groppi A."/>
            <person name="Hantraye F."/>
            <person name="Hennequin C."/>
            <person name="Jauniaux N."/>
            <person name="Joyet P."/>
            <person name="Kachouri R."/>
            <person name="Kerrest A."/>
            <person name="Koszul R."/>
            <person name="Lemaire M."/>
            <person name="Lesur I."/>
            <person name="Ma L."/>
            <person name="Muller H."/>
            <person name="Nicaud J.-M."/>
            <person name="Nikolski M."/>
            <person name="Oztas S."/>
            <person name="Ozier-Kalogeropoulos O."/>
            <person name="Pellenz S."/>
            <person name="Potier S."/>
            <person name="Richard G.-F."/>
            <person name="Straub M.-L."/>
            <person name="Suleau A."/>
            <person name="Swennen D."/>
            <person name="Tekaia F."/>
            <person name="Wesolowski-Louvel M."/>
            <person name="Westhof E."/>
            <person name="Wirth B."/>
            <person name="Zeniou-Meyer M."/>
            <person name="Zivanovic Y."/>
            <person name="Bolotin-Fukuhara M."/>
            <person name="Thierry A."/>
            <person name="Bouchier C."/>
            <person name="Caudron B."/>
            <person name="Scarpelli C."/>
            <person name="Gaillardin C."/>
            <person name="Weissenbach J."/>
            <person name="Wincker P."/>
            <person name="Souciet J.-L."/>
        </authorList>
    </citation>
    <scope>NUCLEOTIDE SEQUENCE [LARGE SCALE GENOMIC DNA]</scope>
    <source>
        <strain>ATCC 8585 / CBS 2359 / DSM 70799 / NBRC 1267 / NRRL Y-1140 / WM37</strain>
    </source>
</reference>
<keyword id="KW-0963">Cytoplasm</keyword>
<keyword id="KW-0472">Membrane</keyword>
<keyword id="KW-0653">Protein transport</keyword>
<keyword id="KW-1185">Reference proteome</keyword>
<keyword id="KW-0813">Transport</keyword>